<gene>
    <name evidence="1" type="primary">speD</name>
    <name type="ordered locus">Maqu_3552</name>
</gene>
<accession>A1U6K2</accession>
<protein>
    <recommendedName>
        <fullName evidence="1">S-adenosylmethionine decarboxylase proenzyme</fullName>
        <shortName evidence="1">AdoMetDC</shortName>
        <shortName evidence="1">SAMDC</shortName>
        <ecNumber evidence="1">4.1.1.50</ecNumber>
    </recommendedName>
    <component>
        <recommendedName>
            <fullName evidence="1">S-adenosylmethionine decarboxylase beta chain</fullName>
        </recommendedName>
    </component>
    <component>
        <recommendedName>
            <fullName evidence="1">S-adenosylmethionine decarboxylase alpha chain</fullName>
        </recommendedName>
    </component>
</protein>
<evidence type="ECO:0000255" key="1">
    <source>
        <dbReference type="HAMAP-Rule" id="MF_00465"/>
    </source>
</evidence>
<proteinExistence type="inferred from homology"/>
<sequence>METKLQLHGFNNLTKSLSFNIYDICYAQTEEQREAYIDYIDEMYNAERLTQILTDVVKIIGANVLNIARQDYEPHGASVTMLIAEHELSDSEANNEESPGPLPDTIVAHLDKSHVTVHTYPESHPHDGVSTFRADIDVSTCGLISPLKVLNYLIHSFDSDVVTVDYRVRGFTRDVDGTKHYIDHDINSIQNYLTEDTQNAYQMIDVNVYQENLFHTKMMLKEFNLDNYVFGVNAGDLDPAEAQSIEDRLRREMLEIFYSRNVE</sequence>
<reference key="1">
    <citation type="journal article" date="2011" name="Appl. Environ. Microbiol.">
        <title>Genomic potential of Marinobacter aquaeolei, a biogeochemical 'opportunitroph'.</title>
        <authorList>
            <person name="Singer E."/>
            <person name="Webb E.A."/>
            <person name="Nelson W.C."/>
            <person name="Heidelberg J.F."/>
            <person name="Ivanova N."/>
            <person name="Pati A."/>
            <person name="Edwards K.J."/>
        </authorList>
    </citation>
    <scope>NUCLEOTIDE SEQUENCE [LARGE SCALE GENOMIC DNA]</scope>
    <source>
        <strain>ATCC 700491 / DSM 11845 / VT8</strain>
    </source>
</reference>
<feature type="chain" id="PRO_0000364391" description="S-adenosylmethionine decarboxylase beta chain" evidence="1">
    <location>
        <begin position="1"/>
        <end position="112"/>
    </location>
</feature>
<feature type="chain" id="PRO_0000364392" description="S-adenosylmethionine decarboxylase alpha chain" evidence="1">
    <location>
        <begin position="113"/>
        <end position="263"/>
    </location>
</feature>
<feature type="active site" description="Schiff-base intermediate with substrate; via pyruvic acid" evidence="1">
    <location>
        <position position="113"/>
    </location>
</feature>
<feature type="active site" description="Proton acceptor; for processing activity" evidence="1">
    <location>
        <position position="118"/>
    </location>
</feature>
<feature type="active site" description="Proton donor; for catalytic activity" evidence="1">
    <location>
        <position position="141"/>
    </location>
</feature>
<feature type="site" description="Cleavage (non-hydrolytic); by autolysis" evidence="1">
    <location>
        <begin position="112"/>
        <end position="113"/>
    </location>
</feature>
<feature type="modified residue" description="Pyruvic acid (Ser); by autocatalysis" evidence="1">
    <location>
        <position position="113"/>
    </location>
</feature>
<name>SPED_MARN8</name>
<keyword id="KW-0068">Autocatalytic cleavage</keyword>
<keyword id="KW-0210">Decarboxylase</keyword>
<keyword id="KW-0456">Lyase</keyword>
<keyword id="KW-0620">Polyamine biosynthesis</keyword>
<keyword id="KW-0670">Pyruvate</keyword>
<keyword id="KW-0949">S-adenosyl-L-methionine</keyword>
<keyword id="KW-0704">Schiff base</keyword>
<keyword id="KW-0745">Spermidine biosynthesis</keyword>
<keyword id="KW-0865">Zymogen</keyword>
<organism>
    <name type="scientific">Marinobacter nauticus (strain ATCC 700491 / DSM 11845 / VT8)</name>
    <name type="common">Marinobacter aquaeolei</name>
    <dbReference type="NCBI Taxonomy" id="351348"/>
    <lineage>
        <taxon>Bacteria</taxon>
        <taxon>Pseudomonadati</taxon>
        <taxon>Pseudomonadota</taxon>
        <taxon>Gammaproteobacteria</taxon>
        <taxon>Pseudomonadales</taxon>
        <taxon>Marinobacteraceae</taxon>
        <taxon>Marinobacter</taxon>
    </lineage>
</organism>
<comment type="function">
    <text evidence="1">Catalyzes the decarboxylation of S-adenosylmethionine to S-adenosylmethioninamine (dcAdoMet), the propylamine donor required for the synthesis of the polyamines spermine and spermidine from the diamine putrescine.</text>
</comment>
<comment type="catalytic activity">
    <reaction evidence="1">
        <text>S-adenosyl-L-methionine + H(+) = S-adenosyl 3-(methylsulfanyl)propylamine + CO2</text>
        <dbReference type="Rhea" id="RHEA:15981"/>
        <dbReference type="ChEBI" id="CHEBI:15378"/>
        <dbReference type="ChEBI" id="CHEBI:16526"/>
        <dbReference type="ChEBI" id="CHEBI:57443"/>
        <dbReference type="ChEBI" id="CHEBI:59789"/>
        <dbReference type="EC" id="4.1.1.50"/>
    </reaction>
</comment>
<comment type="cofactor">
    <cofactor evidence="1">
        <name>pyruvate</name>
        <dbReference type="ChEBI" id="CHEBI:15361"/>
    </cofactor>
    <text evidence="1">Binds 1 pyruvoyl group covalently per subunit.</text>
</comment>
<comment type="pathway">
    <text evidence="1">Amine and polyamine biosynthesis; S-adenosylmethioninamine biosynthesis; S-adenosylmethioninamine from S-adenosyl-L-methionine: step 1/1.</text>
</comment>
<comment type="subunit">
    <text evidence="1">Heterooctamer of four alpha and four beta chains arranged as a tetramer of alpha/beta heterodimers.</text>
</comment>
<comment type="PTM">
    <text evidence="1">Is synthesized initially as an inactive proenzyme. Formation of the active enzyme involves a self-maturation process in which the active site pyruvoyl group is generated from an internal serine residue via an autocatalytic post-translational modification. Two non-identical subunits are generated from the proenzyme in this reaction, and the pyruvate is formed at the N-terminus of the alpha chain, which is derived from the carboxyl end of the proenzyme. The post-translation cleavage follows an unusual pathway, termed non-hydrolytic serinolysis, in which the side chain hydroxyl group of the serine supplies its oxygen atom to form the C-terminus of the beta chain, while the remainder of the serine residue undergoes an oxidative deamination to produce ammonia and the pyruvoyl group blocking the N-terminus of the alpha chain.</text>
</comment>
<comment type="similarity">
    <text evidence="1">Belongs to the prokaryotic AdoMetDC family. Type 2 subfamily.</text>
</comment>
<dbReference type="EC" id="4.1.1.50" evidence="1"/>
<dbReference type="EMBL" id="CP000514">
    <property type="protein sequence ID" value="ABM20621.1"/>
    <property type="molecule type" value="Genomic_DNA"/>
</dbReference>
<dbReference type="RefSeq" id="WP_011786962.1">
    <property type="nucleotide sequence ID" value="NC_008740.1"/>
</dbReference>
<dbReference type="SMR" id="A1U6K2"/>
<dbReference type="STRING" id="351348.Maqu_3552"/>
<dbReference type="GeneID" id="31822797"/>
<dbReference type="KEGG" id="maq:Maqu_3552"/>
<dbReference type="eggNOG" id="COG1586">
    <property type="taxonomic scope" value="Bacteria"/>
</dbReference>
<dbReference type="HOGENOM" id="CLU_092007_0_0_6"/>
<dbReference type="OrthoDB" id="5290709at2"/>
<dbReference type="UniPathway" id="UPA00331">
    <property type="reaction ID" value="UER00451"/>
</dbReference>
<dbReference type="Proteomes" id="UP000000998">
    <property type="component" value="Chromosome"/>
</dbReference>
<dbReference type="GO" id="GO:0005829">
    <property type="term" value="C:cytosol"/>
    <property type="evidence" value="ECO:0007669"/>
    <property type="project" value="TreeGrafter"/>
</dbReference>
<dbReference type="GO" id="GO:0004014">
    <property type="term" value="F:adenosylmethionine decarboxylase activity"/>
    <property type="evidence" value="ECO:0007669"/>
    <property type="project" value="UniProtKB-UniRule"/>
</dbReference>
<dbReference type="GO" id="GO:0008295">
    <property type="term" value="P:spermidine biosynthetic process"/>
    <property type="evidence" value="ECO:0007669"/>
    <property type="project" value="UniProtKB-UniRule"/>
</dbReference>
<dbReference type="Gene3D" id="3.60.90.10">
    <property type="entry name" value="S-adenosylmethionine decarboxylase"/>
    <property type="match status" value="1"/>
</dbReference>
<dbReference type="HAMAP" id="MF_00465">
    <property type="entry name" value="AdoMetDC_2"/>
    <property type="match status" value="1"/>
</dbReference>
<dbReference type="InterPro" id="IPR003826">
    <property type="entry name" value="AdoMetDC_fam_prok"/>
</dbReference>
<dbReference type="InterPro" id="IPR009165">
    <property type="entry name" value="S-AdoMet_deCO2ase_bac"/>
</dbReference>
<dbReference type="InterPro" id="IPR016067">
    <property type="entry name" value="S-AdoMet_deCO2ase_core"/>
</dbReference>
<dbReference type="NCBIfam" id="TIGR03331">
    <property type="entry name" value="SAM_DCase_Eco"/>
    <property type="match status" value="1"/>
</dbReference>
<dbReference type="PANTHER" id="PTHR33866">
    <property type="entry name" value="S-ADENOSYLMETHIONINE DECARBOXYLASE PROENZYME"/>
    <property type="match status" value="1"/>
</dbReference>
<dbReference type="PANTHER" id="PTHR33866:SF1">
    <property type="entry name" value="S-ADENOSYLMETHIONINE DECARBOXYLASE PROENZYME"/>
    <property type="match status" value="1"/>
</dbReference>
<dbReference type="Pfam" id="PF02675">
    <property type="entry name" value="AdoMet_dc"/>
    <property type="match status" value="1"/>
</dbReference>
<dbReference type="PIRSF" id="PIRSF001356">
    <property type="entry name" value="SAM_decarboxylas"/>
    <property type="match status" value="1"/>
</dbReference>
<dbReference type="SUPFAM" id="SSF56276">
    <property type="entry name" value="S-adenosylmethionine decarboxylase"/>
    <property type="match status" value="1"/>
</dbReference>